<proteinExistence type="evidence at protein level"/>
<feature type="signal peptide" evidence="6">
    <location>
        <begin position="1"/>
        <end position="29"/>
    </location>
</feature>
<feature type="chain" id="PRO_0000008023" description="Endoglucanase B">
    <location>
        <begin position="30"/>
        <end position="511"/>
    </location>
</feature>
<feature type="domain" description="CBM2" evidence="3">
    <location>
        <begin position="30"/>
        <end position="130"/>
    </location>
</feature>
<feature type="domain" description="CBM10" evidence="2">
    <location>
        <begin position="180"/>
        <end position="209"/>
    </location>
</feature>
<feature type="region of interest" description="Disordered" evidence="5">
    <location>
        <begin position="137"/>
        <end position="173"/>
    </location>
</feature>
<feature type="active site" description="Nucleophile" evidence="4">
    <location>
        <position position="276"/>
    </location>
</feature>
<feature type="active site" description="Proton donor" evidence="1">
    <location>
        <position position="393"/>
    </location>
</feature>
<feature type="disulfide bond" evidence="1">
    <location>
        <begin position="32"/>
        <end position="127"/>
    </location>
</feature>
<feature type="disulfide bond" evidence="1">
    <location>
        <begin position="181"/>
        <end position="212"/>
    </location>
</feature>
<feature type="disulfide bond" evidence="1">
    <location>
        <begin position="191"/>
        <end position="206"/>
    </location>
</feature>
<evidence type="ECO:0000250" key="1"/>
<evidence type="ECO:0000255" key="2">
    <source>
        <dbReference type="PROSITE-ProRule" id="PRU01099"/>
    </source>
</evidence>
<evidence type="ECO:0000255" key="3">
    <source>
        <dbReference type="PROSITE-ProRule" id="PRU01135"/>
    </source>
</evidence>
<evidence type="ECO:0000255" key="4">
    <source>
        <dbReference type="PROSITE-ProRule" id="PRU10069"/>
    </source>
</evidence>
<evidence type="ECO:0000256" key="5">
    <source>
        <dbReference type="SAM" id="MobiDB-lite"/>
    </source>
</evidence>
<evidence type="ECO:0000269" key="6">
    <source>
    </source>
</evidence>
<evidence type="ECO:0000305" key="7"/>
<accession>P18126</accession>
<accession>B3PI35</accession>
<dbReference type="EC" id="3.2.1.4"/>
<dbReference type="EMBL" id="X52615">
    <property type="protein sequence ID" value="CAA36844.1"/>
    <property type="molecule type" value="Genomic_DNA"/>
</dbReference>
<dbReference type="EMBL" id="CP000934">
    <property type="protein sequence ID" value="ACE82688.1"/>
    <property type="molecule type" value="Genomic_DNA"/>
</dbReference>
<dbReference type="PIR" id="S10527">
    <property type="entry name" value="S10527"/>
</dbReference>
<dbReference type="RefSeq" id="WP_012486056.1">
    <property type="nucleotide sequence ID" value="NC_010995.1"/>
</dbReference>
<dbReference type="SMR" id="P18126"/>
<dbReference type="STRING" id="498211.CJA_0374"/>
<dbReference type="CAZy" id="CBM10">
    <property type="family name" value="Carbohydrate-Binding Module Family 10"/>
</dbReference>
<dbReference type="CAZy" id="CBM2">
    <property type="family name" value="Carbohydrate-Binding Module Family 2"/>
</dbReference>
<dbReference type="CAZy" id="GH45">
    <property type="family name" value="Glycoside Hydrolase Family 45"/>
</dbReference>
<dbReference type="KEGG" id="cja:CJA_0374"/>
<dbReference type="eggNOG" id="COG2730">
    <property type="taxonomic scope" value="Bacteria"/>
</dbReference>
<dbReference type="HOGENOM" id="CLU_532865_0_0_6"/>
<dbReference type="OrthoDB" id="5696284at2"/>
<dbReference type="Proteomes" id="UP000001036">
    <property type="component" value="Chromosome"/>
</dbReference>
<dbReference type="GO" id="GO:0042597">
    <property type="term" value="C:periplasmic space"/>
    <property type="evidence" value="ECO:0007669"/>
    <property type="project" value="UniProtKB-SubCell"/>
</dbReference>
<dbReference type="GO" id="GO:0008810">
    <property type="term" value="F:cellulase activity"/>
    <property type="evidence" value="ECO:0007669"/>
    <property type="project" value="UniProtKB-EC"/>
</dbReference>
<dbReference type="GO" id="GO:0030248">
    <property type="term" value="F:cellulose binding"/>
    <property type="evidence" value="ECO:0007669"/>
    <property type="project" value="InterPro"/>
</dbReference>
<dbReference type="GO" id="GO:0030245">
    <property type="term" value="P:cellulose catabolic process"/>
    <property type="evidence" value="ECO:0007669"/>
    <property type="project" value="UniProtKB-KW"/>
</dbReference>
<dbReference type="Gene3D" id="2.60.40.290">
    <property type="match status" value="1"/>
</dbReference>
<dbReference type="Gene3D" id="2.30.32.30">
    <property type="entry name" value="CBM10"/>
    <property type="match status" value="1"/>
</dbReference>
<dbReference type="Gene3D" id="2.40.40.10">
    <property type="entry name" value="RlpA-like domain"/>
    <property type="match status" value="1"/>
</dbReference>
<dbReference type="InterPro" id="IPR001919">
    <property type="entry name" value="CBD2"/>
</dbReference>
<dbReference type="InterPro" id="IPR009031">
    <property type="entry name" value="CBM10"/>
</dbReference>
<dbReference type="InterPro" id="IPR002883">
    <property type="entry name" value="CBM10/Dockerin_dom"/>
</dbReference>
<dbReference type="InterPro" id="IPR036601">
    <property type="entry name" value="CBM10_sf"/>
</dbReference>
<dbReference type="InterPro" id="IPR008965">
    <property type="entry name" value="CBM2/CBM3_carb-bd_dom_sf"/>
</dbReference>
<dbReference type="InterPro" id="IPR012291">
    <property type="entry name" value="CBM2_carb-bd_dom_sf"/>
</dbReference>
<dbReference type="InterPro" id="IPR018366">
    <property type="entry name" value="CBM2_CS"/>
</dbReference>
<dbReference type="InterPro" id="IPR052288">
    <property type="entry name" value="GH45_Enzymes"/>
</dbReference>
<dbReference type="InterPro" id="IPR000334">
    <property type="entry name" value="Glyco_hydro_45"/>
</dbReference>
<dbReference type="InterPro" id="IPR036908">
    <property type="entry name" value="RlpA-like_sf"/>
</dbReference>
<dbReference type="PANTHER" id="PTHR39730">
    <property type="entry name" value="ENDOGLUCANASE 1"/>
    <property type="match status" value="1"/>
</dbReference>
<dbReference type="PANTHER" id="PTHR39730:SF1">
    <property type="entry name" value="ENDOGLUCANASE 1"/>
    <property type="match status" value="1"/>
</dbReference>
<dbReference type="Pfam" id="PF02013">
    <property type="entry name" value="CBM_10"/>
    <property type="match status" value="1"/>
</dbReference>
<dbReference type="Pfam" id="PF00553">
    <property type="entry name" value="CBM_2"/>
    <property type="match status" value="1"/>
</dbReference>
<dbReference type="Pfam" id="PF02015">
    <property type="entry name" value="Glyco_hydro_45"/>
    <property type="match status" value="1"/>
</dbReference>
<dbReference type="SMART" id="SM00637">
    <property type="entry name" value="CBD_II"/>
    <property type="match status" value="1"/>
</dbReference>
<dbReference type="SMART" id="SM01064">
    <property type="entry name" value="CBM_10"/>
    <property type="match status" value="1"/>
</dbReference>
<dbReference type="SUPFAM" id="SSF50685">
    <property type="entry name" value="Barwin-like endoglucanases"/>
    <property type="match status" value="1"/>
</dbReference>
<dbReference type="SUPFAM" id="SSF49384">
    <property type="entry name" value="Carbohydrate-binding domain"/>
    <property type="match status" value="1"/>
</dbReference>
<dbReference type="SUPFAM" id="SSF57615">
    <property type="entry name" value="Type X cellulose binding domain, CBDX"/>
    <property type="match status" value="1"/>
</dbReference>
<dbReference type="PROSITE" id="PS51763">
    <property type="entry name" value="CBM10"/>
    <property type="match status" value="1"/>
</dbReference>
<dbReference type="PROSITE" id="PS51173">
    <property type="entry name" value="CBM2"/>
    <property type="match status" value="1"/>
</dbReference>
<dbReference type="PROSITE" id="PS00561">
    <property type="entry name" value="CBM2_A"/>
    <property type="match status" value="1"/>
</dbReference>
<dbReference type="PROSITE" id="PS01140">
    <property type="entry name" value="GLYCOSYL_HYDROL_F45"/>
    <property type="match status" value="1"/>
</dbReference>
<organism>
    <name type="scientific">Cellvibrio japonicus (strain Ueda107)</name>
    <name type="common">Pseudomonas fluorescens subsp. cellulosa</name>
    <dbReference type="NCBI Taxonomy" id="498211"/>
    <lineage>
        <taxon>Bacteria</taxon>
        <taxon>Pseudomonadati</taxon>
        <taxon>Pseudomonadota</taxon>
        <taxon>Gammaproteobacteria</taxon>
        <taxon>Cellvibrionales</taxon>
        <taxon>Cellvibrionaceae</taxon>
        <taxon>Cellvibrio</taxon>
    </lineage>
</organism>
<name>GUNB_CELJU</name>
<keyword id="KW-0119">Carbohydrate metabolism</keyword>
<keyword id="KW-0136">Cellulose degradation</keyword>
<keyword id="KW-0903">Direct protein sequencing</keyword>
<keyword id="KW-1015">Disulfide bond</keyword>
<keyword id="KW-0326">Glycosidase</keyword>
<keyword id="KW-0378">Hydrolase</keyword>
<keyword id="KW-0574">Periplasm</keyword>
<keyword id="KW-0624">Polysaccharide degradation</keyword>
<keyword id="KW-1185">Reference proteome</keyword>
<keyword id="KW-0732">Signal</keyword>
<reference key="1">
    <citation type="journal article" date="1990" name="Mol. Microbiol.">
        <title>The N-terminal region of an endoglucanase from Pseudomonas fluorescens subspecies cellulosa constitutes a cellulose-binding domain that is distinct from the catalytic centre.</title>
        <authorList>
            <person name="Gilbert H.J."/>
            <person name="Hall J."/>
            <person name="Hazlewood G.P."/>
            <person name="Ferreira L.M.A."/>
        </authorList>
    </citation>
    <scope>NUCLEOTIDE SEQUENCE [GENOMIC DNA]</scope>
    <scope>PROTEIN SEQUENCE OF 30-48</scope>
</reference>
<reference key="2">
    <citation type="journal article" date="2008" name="J. Bacteriol.">
        <title>Insights into plant cell wall degradation from the genome sequence of the soil bacterium Cellvibrio japonicus.</title>
        <authorList>
            <person name="DeBoy R.T."/>
            <person name="Mongodin E.F."/>
            <person name="Fouts D.E."/>
            <person name="Tailford L.E."/>
            <person name="Khouri H."/>
            <person name="Emerson J.B."/>
            <person name="Mohamoud Y."/>
            <person name="Watkins K."/>
            <person name="Henrissat B."/>
            <person name="Gilbert H.J."/>
            <person name="Nelson K.E."/>
        </authorList>
    </citation>
    <scope>NUCLEOTIDE SEQUENCE [LARGE SCALE GENOMIC DNA]</scope>
    <source>
        <strain>Ueda107</strain>
    </source>
</reference>
<gene>
    <name type="primary">celB</name>
    <name type="synonym">cel45A</name>
    <name type="ordered locus">CJA_0374</name>
</gene>
<protein>
    <recommendedName>
        <fullName>Endoglucanase B</fullName>
        <shortName>EGB</shortName>
        <ecNumber>3.2.1.4</ecNumber>
    </recommendedName>
    <alternativeName>
        <fullName>Cellulase</fullName>
    </alternativeName>
    <alternativeName>
        <fullName>Endo-1,4-beta-glucanase</fullName>
    </alternativeName>
</protein>
<comment type="function">
    <text>This enzyme catalyzes the endohydrolysis of 1,4-beta-glucosidic linkages in cellulose, lichenin and cereal beta-D-glucans. EGB is most active against barley beta-glucan, but showed significant activity against amorphous and crystalline cellulose.</text>
</comment>
<comment type="catalytic activity">
    <reaction>
        <text>Endohydrolysis of (1-&gt;4)-beta-D-glucosidic linkages in cellulose, lichenin and cereal beta-D-glucans.</text>
        <dbReference type="EC" id="3.2.1.4"/>
    </reaction>
</comment>
<comment type="subcellular location">
    <subcellularLocation>
        <location>Periplasm</location>
    </subcellularLocation>
</comment>
<comment type="similarity">
    <text evidence="7">Belongs to the glycosyl hydrolase 45 (cellulase K) family.</text>
</comment>
<sequence>MNLLSGWVRPLMLGCGLLGAALSAGSIQAAVCEYRVTNEWGSGFTASIRITNNGSSTINGWSVSWNYTDGSRVTSSWNAGLSGANPYSATPVGWNTSIPIGSSVEFGVQGNNGSSRAQVPAVTGAICGGQGSSAPSSVASSSSSSSVVSSTPRSSSSSVSSSVPGTSSSSSSSVLTGAQACNWYGTLTPLCNNTSNGWGYEDGRSCVARTTCSAQPAPYGIVSTSSSTPLSSSSSSRSSVASSSSLSSATSSSASSVSSVPPIDGGCNGYATRYWDCCKPHCGWSANVPSLVSPLQSCSANNTRLSDVSVGSSCDGGGGYMCWDKIPFAVSPTLAYGYAATSSGDVCGRCYQLQFTGSSYNAPGDPGSAALAGKTMIVQATNIGYDVSGGQFDILVPGGGVGAFNACSAQWGVSNAELGAQYGGFLAACKQQLGYNASLSQYKSCVLNRCDSVFGSRGLTQLQQGCTWFAEWFEAADNPSLKYKEVPCPAELTTRSGMNRSILNDIRNTCP</sequence>